<evidence type="ECO:0000250" key="1">
    <source>
        <dbReference type="UniProtKB" id="P0ABI4"/>
    </source>
</evidence>
<evidence type="ECO:0000250" key="2">
    <source>
        <dbReference type="UniProtKB" id="Q9WZ31"/>
    </source>
</evidence>
<evidence type="ECO:0000255" key="3"/>
<evidence type="ECO:0000305" key="4"/>
<name>CORA_SHISS</name>
<feature type="chain" id="PRO_0000239105" description="Magnesium transport protein CorA">
    <location>
        <begin position="1"/>
        <end position="316"/>
    </location>
</feature>
<feature type="transmembrane region" description="Helical" evidence="3">
    <location>
        <begin position="258"/>
        <end position="278"/>
    </location>
</feature>
<feature type="transmembrane region" description="Helical" evidence="3">
    <location>
        <begin position="290"/>
        <end position="310"/>
    </location>
</feature>
<feature type="short sequence motif" description="Probable selectivity filter" evidence="2">
    <location>
        <begin position="277"/>
        <end position="279"/>
    </location>
</feature>
<feature type="site" description="Essential for ion permeation" evidence="2">
    <location>
        <position position="253"/>
    </location>
</feature>
<accession>Q3YVE9</accession>
<protein>
    <recommendedName>
        <fullName>Magnesium transport protein CorA</fullName>
    </recommendedName>
</protein>
<gene>
    <name type="primary">corA</name>
    <name type="ordered locus">SSON_3991</name>
</gene>
<organism>
    <name type="scientific">Shigella sonnei (strain Ss046)</name>
    <dbReference type="NCBI Taxonomy" id="300269"/>
    <lineage>
        <taxon>Bacteria</taxon>
        <taxon>Pseudomonadati</taxon>
        <taxon>Pseudomonadota</taxon>
        <taxon>Gammaproteobacteria</taxon>
        <taxon>Enterobacterales</taxon>
        <taxon>Enterobacteriaceae</taxon>
        <taxon>Shigella</taxon>
    </lineage>
</organism>
<reference key="1">
    <citation type="journal article" date="2005" name="Nucleic Acids Res.">
        <title>Genome dynamics and diversity of Shigella species, the etiologic agents of bacillary dysentery.</title>
        <authorList>
            <person name="Yang F."/>
            <person name="Yang J."/>
            <person name="Zhang X."/>
            <person name="Chen L."/>
            <person name="Jiang Y."/>
            <person name="Yan Y."/>
            <person name="Tang X."/>
            <person name="Wang J."/>
            <person name="Xiong Z."/>
            <person name="Dong J."/>
            <person name="Xue Y."/>
            <person name="Zhu Y."/>
            <person name="Xu X."/>
            <person name="Sun L."/>
            <person name="Chen S."/>
            <person name="Nie H."/>
            <person name="Peng J."/>
            <person name="Xu J."/>
            <person name="Wang Y."/>
            <person name="Yuan Z."/>
            <person name="Wen Y."/>
            <person name="Yao Z."/>
            <person name="Shen Y."/>
            <person name="Qiang B."/>
            <person name="Hou Y."/>
            <person name="Yu J."/>
            <person name="Jin Q."/>
        </authorList>
    </citation>
    <scope>NUCLEOTIDE SEQUENCE [LARGE SCALE GENOMIC DNA]</scope>
    <source>
        <strain>Ss046</strain>
    </source>
</reference>
<keyword id="KW-0997">Cell inner membrane</keyword>
<keyword id="KW-1003">Cell membrane</keyword>
<keyword id="KW-0406">Ion transport</keyword>
<keyword id="KW-0460">Magnesium</keyword>
<keyword id="KW-0472">Membrane</keyword>
<keyword id="KW-1185">Reference proteome</keyword>
<keyword id="KW-0812">Transmembrane</keyword>
<keyword id="KW-1133">Transmembrane helix</keyword>
<keyword id="KW-0813">Transport</keyword>
<comment type="function">
    <text evidence="1 2">Mediates influx of magnesium ions (By similarity). Alternates between open and closed states. Activated by low cytoplasmic Mg(2+) levels. Inactive when cytoplasmic Mg(2+) levels are high (By similarity).</text>
</comment>
<comment type="catalytic activity">
    <reaction evidence="1">
        <text>Mg(2+)(in) = Mg(2+)(out)</text>
        <dbReference type="Rhea" id="RHEA:29827"/>
        <dbReference type="ChEBI" id="CHEBI:18420"/>
    </reaction>
</comment>
<comment type="subunit">
    <text evidence="2">Homopentamer. In the absence of Mg(2+), interactions between subunits are weakened, and dimers, trimers and tetramers can be observed in vitro (By similarity).</text>
</comment>
<comment type="subcellular location">
    <subcellularLocation>
        <location evidence="1">Cell inner membrane</location>
        <topology evidence="2">Multi-pass membrane protein</topology>
    </subcellularLocation>
</comment>
<comment type="domain">
    <text evidence="2">The central ion permeation pathway is formed by the first transmembrane domain from each of the five subunits. Mg(2+) binding strengthens interactions between subunits and leads to the formation of a symmetrical homopentamer surrounding a closed ion permeation pathway. Low Mg(2+) concentrations trigger both a conformation change within each subunit and a loosening of the interactions between subunits. This results in an open ion conduction pathway. In addition, this results in a less symmetrical shape of the whole complex.</text>
</comment>
<comment type="similarity">
    <text evidence="4">Belongs to the CorA metal ion transporter (MIT) (TC 1.A.35) family.</text>
</comment>
<sequence length="316" mass="36590">MLSAFQLENNRLTRLEVEESQPLVNAVWIDLVEPDDDERLRVQSELGQSLATRPELEDIEASARFFEDDDGLHIHSFFFFEDAEDHAGNSTVAFTIRDGRLFTLRERELPAFRLYRMRARSQSMVDGNAYELLLDLFETKIEQLADEIENIYSDLEQLSRVIMEGHQGDEYDEALSTLAELEDIGWKVRLCLMDTQRALNFLVRKARLPGGQLEQAREILRDIESLLPHNESLFQKVNFLMQAAMGFINIEQNRIIKIFSVVSVVFLPPTLVASSYGMNFEFMPELKWSFGYPGAIIFMILAGLAPYLYFKRKNWL</sequence>
<dbReference type="EMBL" id="CP000038">
    <property type="protein sequence ID" value="AAZ90513.1"/>
    <property type="molecule type" value="Genomic_DNA"/>
</dbReference>
<dbReference type="RefSeq" id="WP_000947159.1">
    <property type="nucleotide sequence ID" value="NC_007384.1"/>
</dbReference>
<dbReference type="SMR" id="Q3YVE9"/>
<dbReference type="GeneID" id="93778125"/>
<dbReference type="KEGG" id="ssn:SSON_3991"/>
<dbReference type="HOGENOM" id="CLU_007127_5_0_6"/>
<dbReference type="Proteomes" id="UP000002529">
    <property type="component" value="Chromosome"/>
</dbReference>
<dbReference type="GO" id="GO:0005886">
    <property type="term" value="C:plasma membrane"/>
    <property type="evidence" value="ECO:0007669"/>
    <property type="project" value="UniProtKB-SubCell"/>
</dbReference>
<dbReference type="GO" id="GO:0015087">
    <property type="term" value="F:cobalt ion transmembrane transporter activity"/>
    <property type="evidence" value="ECO:0007669"/>
    <property type="project" value="InterPro"/>
</dbReference>
<dbReference type="GO" id="GO:0015095">
    <property type="term" value="F:magnesium ion transmembrane transporter activity"/>
    <property type="evidence" value="ECO:0007669"/>
    <property type="project" value="InterPro"/>
</dbReference>
<dbReference type="GO" id="GO:0015099">
    <property type="term" value="F:nickel cation transmembrane transporter activity"/>
    <property type="evidence" value="ECO:0007669"/>
    <property type="project" value="TreeGrafter"/>
</dbReference>
<dbReference type="CDD" id="cd12835">
    <property type="entry name" value="EcCorA-like_1"/>
    <property type="match status" value="1"/>
</dbReference>
<dbReference type="FunFam" id="1.20.58.340:FF:000001">
    <property type="entry name" value="Magnesium transport protein CorA"/>
    <property type="match status" value="1"/>
</dbReference>
<dbReference type="Gene3D" id="1.20.58.340">
    <property type="entry name" value="Magnesium transport protein CorA, transmembrane region"/>
    <property type="match status" value="1"/>
</dbReference>
<dbReference type="InterPro" id="IPR045861">
    <property type="entry name" value="CorA_cytoplasmic_dom"/>
</dbReference>
<dbReference type="InterPro" id="IPR050829">
    <property type="entry name" value="CorA_MIT"/>
</dbReference>
<dbReference type="InterPro" id="IPR045863">
    <property type="entry name" value="CorA_TM1_TM2"/>
</dbReference>
<dbReference type="InterPro" id="IPR004488">
    <property type="entry name" value="Mg/Co-transport_prot_CorA"/>
</dbReference>
<dbReference type="InterPro" id="IPR002523">
    <property type="entry name" value="MgTranspt_CorA/ZnTranspt_ZntB"/>
</dbReference>
<dbReference type="NCBIfam" id="TIGR00383">
    <property type="entry name" value="corA"/>
    <property type="match status" value="1"/>
</dbReference>
<dbReference type="PANTHER" id="PTHR47685">
    <property type="entry name" value="MAGNESIUM TRANSPORT PROTEIN CORA"/>
    <property type="match status" value="1"/>
</dbReference>
<dbReference type="PANTHER" id="PTHR47685:SF1">
    <property type="entry name" value="MAGNESIUM TRANSPORT PROTEIN CORA"/>
    <property type="match status" value="1"/>
</dbReference>
<dbReference type="Pfam" id="PF01544">
    <property type="entry name" value="CorA"/>
    <property type="match status" value="1"/>
</dbReference>
<dbReference type="SUPFAM" id="SSF143865">
    <property type="entry name" value="CorA soluble domain-like"/>
    <property type="match status" value="1"/>
</dbReference>
<dbReference type="SUPFAM" id="SSF144083">
    <property type="entry name" value="Magnesium transport protein CorA, transmembrane region"/>
    <property type="match status" value="1"/>
</dbReference>
<proteinExistence type="inferred from homology"/>